<name>HBEAG_HBVD4</name>
<keyword id="KW-0024">Alternative initiation</keyword>
<keyword id="KW-1185">Reference proteome</keyword>
<comment type="alternative products">
    <event type="alternative initiation"/>
    <isoform>
        <id>P0C6I0-1</id>
        <name>External core antigen</name>
        <sequence type="displayed"/>
    </isoform>
    <isoform>
        <id>Q9QMI2-1</id>
        <name>Capsid protein</name>
        <sequence type="external"/>
    </isoform>
</comment>
<comment type="miscellaneous">
    <text>This virus has been isolated from a low asymptomatic carrier of HBV. A genomic mutation in 1896 creates a stop codon at position 28 of HBeAg, without affecting capsid open reading frame. The HBeAg negative variants of HBV are associated with fulminant hepatitis, but can also be found in patients with persistent infection and chronic hepatitis.</text>
</comment>
<sequence>MQLFHLCLIIFCSCPTVQASKLCLGWL</sequence>
<accession>P0C6I0</accession>
<protein>
    <recommendedName>
        <fullName>Truncated HBeAg protein</fullName>
    </recommendedName>
</protein>
<organismHost>
    <name type="scientific">Homo sapiens</name>
    <name type="common">Human</name>
    <dbReference type="NCBI Taxonomy" id="9606"/>
</organismHost>
<organismHost>
    <name type="scientific">Pan troglodytes</name>
    <name type="common">Chimpanzee</name>
    <dbReference type="NCBI Taxonomy" id="9598"/>
</organismHost>
<gene>
    <name type="primary">C</name>
</gene>
<reference key="1">
    <citation type="journal article" date="1988" name="J. Gen. Virol.">
        <title>Typing hepatitis B virus by homology in nucleotide sequence: comparison of surface antigen subtypes.</title>
        <authorList>
            <person name="Okamoto H."/>
            <person name="Tsuda F."/>
            <person name="Sakugawa H."/>
            <person name="Sastrosoewignjo R.I."/>
            <person name="Imai M."/>
            <person name="Miyakawa Y."/>
            <person name="Mayumi M."/>
        </authorList>
    </citation>
    <scope>NUCLEOTIDE SEQUENCE [GENOMIC DNA]</scope>
</reference>
<organism>
    <name type="scientific">Hepatitis B virus genotype D subtype ayw (isolate Japan/JYW796/1988)</name>
    <name type="common">HBV-D</name>
    <dbReference type="NCBI Taxonomy" id="489487"/>
    <lineage>
        <taxon>Viruses</taxon>
        <taxon>Riboviria</taxon>
        <taxon>Pararnavirae</taxon>
        <taxon>Artverviricota</taxon>
        <taxon>Revtraviricetes</taxon>
        <taxon>Blubervirales</taxon>
        <taxon>Hepadnaviridae</taxon>
        <taxon>Orthohepadnavirus</taxon>
        <taxon>Hepatitis B virus</taxon>
        <taxon>hepatitis B virus genotype D</taxon>
    </lineage>
</organism>
<feature type="chain" id="PRO_0000324726" description="Truncated HBeAg protein">
    <location>
        <begin position="1"/>
        <end position="27"/>
    </location>
</feature>
<proteinExistence type="predicted"/>
<dbReference type="EMBL" id="AB033558">
    <property type="status" value="NOT_ANNOTATED_CDS"/>
    <property type="molecule type" value="Genomic_DNA"/>
</dbReference>
<dbReference type="Proteomes" id="UP000007931">
    <property type="component" value="Genome"/>
</dbReference>
<dbReference type="GO" id="GO:0005198">
    <property type="term" value="F:structural molecule activity"/>
    <property type="evidence" value="ECO:0007669"/>
    <property type="project" value="InterPro"/>
</dbReference>
<dbReference type="InterPro" id="IPR013195">
    <property type="entry name" value="Hepatitis_B_virus_capsid_N"/>
</dbReference>
<dbReference type="Pfam" id="PF08290">
    <property type="entry name" value="Hep_core_N"/>
    <property type="match status" value="1"/>
</dbReference>